<sequence>MSGHSKWSTIKRKKGTLDAKRNKIFTKLIREISIAARMGGGDIDSNPRLRLAVNKARVANMPKDNIEKAIKKGIGDNMGSEYFELTYEAYALYGVALIIKCLTDNKNRTASEVRSVLSKSGGSLGAPGSVSYMFHKKGLISYNLDKYHEDEIIELALEAGAEDIYSEGSQVEVITSADNFESVSSILRTKFEEDIAEVALVPESKVALDKEQMDKVLAIIEKLEDCDDVQEVYHNLEIVDDIC</sequence>
<name>Y030_BORDL</name>
<comment type="subcellular location">
    <subcellularLocation>
        <location evidence="1">Cytoplasm</location>
    </subcellularLocation>
</comment>
<comment type="similarity">
    <text evidence="1">Belongs to the TACO1 family.</text>
</comment>
<protein>
    <recommendedName>
        <fullName evidence="1">Probable transcriptional regulatory protein BDU_30</fullName>
    </recommendedName>
</protein>
<organism>
    <name type="scientific">Borrelia duttonii (strain Ly)</name>
    <dbReference type="NCBI Taxonomy" id="412419"/>
    <lineage>
        <taxon>Bacteria</taxon>
        <taxon>Pseudomonadati</taxon>
        <taxon>Spirochaetota</taxon>
        <taxon>Spirochaetia</taxon>
        <taxon>Spirochaetales</taxon>
        <taxon>Borreliaceae</taxon>
        <taxon>Borrelia</taxon>
    </lineage>
</organism>
<accession>B5RLN2</accession>
<feature type="chain" id="PRO_1000132158" description="Probable transcriptional regulatory protein BDU_30">
    <location>
        <begin position="1"/>
        <end position="243"/>
    </location>
</feature>
<proteinExistence type="inferred from homology"/>
<evidence type="ECO:0000255" key="1">
    <source>
        <dbReference type="HAMAP-Rule" id="MF_00693"/>
    </source>
</evidence>
<gene>
    <name type="ordered locus">BDU_30</name>
</gene>
<keyword id="KW-0963">Cytoplasm</keyword>
<keyword id="KW-0238">DNA-binding</keyword>
<keyword id="KW-0804">Transcription</keyword>
<keyword id="KW-0805">Transcription regulation</keyword>
<dbReference type="EMBL" id="CP000976">
    <property type="protein sequence ID" value="ACH92988.1"/>
    <property type="molecule type" value="Genomic_DNA"/>
</dbReference>
<dbReference type="RefSeq" id="WP_012537800.1">
    <property type="nucleotide sequence ID" value="NC_011229.1"/>
</dbReference>
<dbReference type="SMR" id="B5RLN2"/>
<dbReference type="STRING" id="412419.BDU_30"/>
<dbReference type="KEGG" id="bdu:BDU_30"/>
<dbReference type="eggNOG" id="COG0217">
    <property type="taxonomic scope" value="Bacteria"/>
</dbReference>
<dbReference type="HOGENOM" id="CLU_062974_2_2_12"/>
<dbReference type="OrthoDB" id="9781053at2"/>
<dbReference type="Proteomes" id="UP000000611">
    <property type="component" value="Chromosome"/>
</dbReference>
<dbReference type="GO" id="GO:0005829">
    <property type="term" value="C:cytosol"/>
    <property type="evidence" value="ECO:0007669"/>
    <property type="project" value="TreeGrafter"/>
</dbReference>
<dbReference type="GO" id="GO:0003677">
    <property type="term" value="F:DNA binding"/>
    <property type="evidence" value="ECO:0007669"/>
    <property type="project" value="UniProtKB-UniRule"/>
</dbReference>
<dbReference type="GO" id="GO:0006355">
    <property type="term" value="P:regulation of DNA-templated transcription"/>
    <property type="evidence" value="ECO:0007669"/>
    <property type="project" value="UniProtKB-UniRule"/>
</dbReference>
<dbReference type="FunFam" id="1.10.10.200:FF:000002">
    <property type="entry name" value="Probable transcriptional regulatory protein CLM62_37755"/>
    <property type="match status" value="1"/>
</dbReference>
<dbReference type="Gene3D" id="1.10.10.200">
    <property type="match status" value="1"/>
</dbReference>
<dbReference type="Gene3D" id="3.30.70.980">
    <property type="match status" value="2"/>
</dbReference>
<dbReference type="HAMAP" id="MF_00693">
    <property type="entry name" value="Transcrip_reg_TACO1"/>
    <property type="match status" value="1"/>
</dbReference>
<dbReference type="InterPro" id="IPR017856">
    <property type="entry name" value="Integrase-like_N"/>
</dbReference>
<dbReference type="InterPro" id="IPR048300">
    <property type="entry name" value="TACO1_YebC-like_2nd/3rd_dom"/>
</dbReference>
<dbReference type="InterPro" id="IPR049083">
    <property type="entry name" value="TACO1_YebC_N"/>
</dbReference>
<dbReference type="InterPro" id="IPR002876">
    <property type="entry name" value="Transcrip_reg_TACO1-like"/>
</dbReference>
<dbReference type="InterPro" id="IPR026564">
    <property type="entry name" value="Transcrip_reg_TACO1-like_dom3"/>
</dbReference>
<dbReference type="InterPro" id="IPR029072">
    <property type="entry name" value="YebC-like"/>
</dbReference>
<dbReference type="NCBIfam" id="NF001030">
    <property type="entry name" value="PRK00110.1"/>
    <property type="match status" value="1"/>
</dbReference>
<dbReference type="NCBIfam" id="NF009044">
    <property type="entry name" value="PRK12378.1"/>
    <property type="match status" value="1"/>
</dbReference>
<dbReference type="NCBIfam" id="TIGR01033">
    <property type="entry name" value="YebC/PmpR family DNA-binding transcriptional regulator"/>
    <property type="match status" value="1"/>
</dbReference>
<dbReference type="PANTHER" id="PTHR12532:SF6">
    <property type="entry name" value="TRANSCRIPTIONAL REGULATORY PROTEIN YEBC-RELATED"/>
    <property type="match status" value="1"/>
</dbReference>
<dbReference type="PANTHER" id="PTHR12532">
    <property type="entry name" value="TRANSLATIONAL ACTIVATOR OF CYTOCHROME C OXIDASE 1"/>
    <property type="match status" value="1"/>
</dbReference>
<dbReference type="Pfam" id="PF20772">
    <property type="entry name" value="TACO1_YebC_N"/>
    <property type="match status" value="1"/>
</dbReference>
<dbReference type="Pfam" id="PF01709">
    <property type="entry name" value="Transcrip_reg"/>
    <property type="match status" value="1"/>
</dbReference>
<dbReference type="SUPFAM" id="SSF75625">
    <property type="entry name" value="YebC-like"/>
    <property type="match status" value="1"/>
</dbReference>
<reference key="1">
    <citation type="journal article" date="2008" name="PLoS Genet.">
        <title>The genome of Borrelia recurrentis, the agent of deadly louse-borne relapsing fever, is a degraded subset of tick-borne Borrelia duttonii.</title>
        <authorList>
            <person name="Lescot M."/>
            <person name="Audic S."/>
            <person name="Robert C."/>
            <person name="Nguyen T.T."/>
            <person name="Blanc G."/>
            <person name="Cutler S.J."/>
            <person name="Wincker P."/>
            <person name="Couloux A."/>
            <person name="Claverie J.-M."/>
            <person name="Raoult D."/>
            <person name="Drancourt M."/>
        </authorList>
    </citation>
    <scope>NUCLEOTIDE SEQUENCE [LARGE SCALE GENOMIC DNA]</scope>
    <source>
        <strain>Ly</strain>
    </source>
</reference>